<organism>
    <name type="scientific">Moorella thermoacetica (strain ATCC 39073 / JCM 9320)</name>
    <dbReference type="NCBI Taxonomy" id="264732"/>
    <lineage>
        <taxon>Bacteria</taxon>
        <taxon>Bacillati</taxon>
        <taxon>Bacillota</taxon>
        <taxon>Clostridia</taxon>
        <taxon>Moorellales</taxon>
        <taxon>Moorellaceae</taxon>
        <taxon>Moorella</taxon>
    </lineage>
</organism>
<sequence>MLPTRRPLAEVTRELVAVATGKLPADTVIKGGKVVNVFTGEILPWDIAIKNGRIASVGDVSAAVGPETEVIDASGYYLCPGFMDGHVHVESSMVTVTQFARAVLPGGTTAIFMDPHEIANVLGMDGVKLMVDEGRELPLKVFATMPSCVPAAPGFEDAGASFGPEEVAAAMQWPGICGLGEMMNFPGVLAGDPAVHGELRATLAAGKPITGHFAMPADFQGLAGYTAAGISSCHESTRTEDALNRLRLGMYAMMREGSAWHDIKATIKSLTETRVDSRRAMLVSDDTHPETLLSTGHLNHVVRRAIEEGLNPIRAIQAVTINTAECFGVAQDLGAIAPGRYADILFLKDLARVAIDKVMVDGRVVAAGGRLLVDLPAVAYPDRVRHSVHLKEPLTPWHFRINAPAGKSRVQVRVMEIIEANVNTRHLTVTVPVVDGQVTAGVEADLAKVAVVERHGGNGSIGLGFVRGFGFKAGAVASTVAHDSHNLLIVGMNDADMALAGNTLAGCGGGMVAVRDGQVLALLPLPIAGLMSDRPVEEVAARLAAVHRAWQELGCRLVSPFMTMALLSLPVLPELRLTNRGLVDTLQFKMVDLITG</sequence>
<dbReference type="EC" id="3.5.4.2" evidence="1"/>
<dbReference type="EMBL" id="CP000232">
    <property type="protein sequence ID" value="ABC18794.1"/>
    <property type="molecule type" value="Genomic_DNA"/>
</dbReference>
<dbReference type="RefSeq" id="YP_429337.1">
    <property type="nucleotide sequence ID" value="NC_007644.1"/>
</dbReference>
<dbReference type="SMR" id="Q2RL95"/>
<dbReference type="STRING" id="264732.Moth_0463"/>
<dbReference type="EnsemblBacteria" id="ABC18794">
    <property type="protein sequence ID" value="ABC18794"/>
    <property type="gene ID" value="Moth_0463"/>
</dbReference>
<dbReference type="KEGG" id="mta:Moth_0463"/>
<dbReference type="PATRIC" id="fig|264732.11.peg.498"/>
<dbReference type="eggNOG" id="COG1001">
    <property type="taxonomic scope" value="Bacteria"/>
</dbReference>
<dbReference type="HOGENOM" id="CLU_027935_0_0_9"/>
<dbReference type="OrthoDB" id="9775607at2"/>
<dbReference type="GO" id="GO:0000034">
    <property type="term" value="F:adenine deaminase activity"/>
    <property type="evidence" value="ECO:0007669"/>
    <property type="project" value="UniProtKB-UniRule"/>
</dbReference>
<dbReference type="GO" id="GO:0006146">
    <property type="term" value="P:adenine catabolic process"/>
    <property type="evidence" value="ECO:0007669"/>
    <property type="project" value="InterPro"/>
</dbReference>
<dbReference type="CDD" id="cd01295">
    <property type="entry name" value="AdeC"/>
    <property type="match status" value="1"/>
</dbReference>
<dbReference type="FunFam" id="3.20.20.140:FF:000016">
    <property type="entry name" value="Adenine deaminase"/>
    <property type="match status" value="1"/>
</dbReference>
<dbReference type="Gene3D" id="3.20.20.140">
    <property type="entry name" value="Metal-dependent hydrolases"/>
    <property type="match status" value="1"/>
</dbReference>
<dbReference type="Gene3D" id="2.30.40.10">
    <property type="entry name" value="Urease, subunit C, domain 1"/>
    <property type="match status" value="1"/>
</dbReference>
<dbReference type="HAMAP" id="MF_01518">
    <property type="entry name" value="Adenine_deamin"/>
    <property type="match status" value="1"/>
</dbReference>
<dbReference type="InterPro" id="IPR006679">
    <property type="entry name" value="Adenine_deam"/>
</dbReference>
<dbReference type="InterPro" id="IPR026912">
    <property type="entry name" value="Adenine_deam_C"/>
</dbReference>
<dbReference type="InterPro" id="IPR006680">
    <property type="entry name" value="Amidohydro-rel"/>
</dbReference>
<dbReference type="InterPro" id="IPR011059">
    <property type="entry name" value="Metal-dep_hydrolase_composite"/>
</dbReference>
<dbReference type="InterPro" id="IPR032466">
    <property type="entry name" value="Metal_Hydrolase"/>
</dbReference>
<dbReference type="NCBIfam" id="TIGR01178">
    <property type="entry name" value="ade"/>
    <property type="match status" value="1"/>
</dbReference>
<dbReference type="PANTHER" id="PTHR11113:SF2">
    <property type="entry name" value="ADENINE DEAMINASE"/>
    <property type="match status" value="1"/>
</dbReference>
<dbReference type="PANTHER" id="PTHR11113">
    <property type="entry name" value="N-ACETYLGLUCOSAMINE-6-PHOSPHATE DEACETYLASE"/>
    <property type="match status" value="1"/>
</dbReference>
<dbReference type="Pfam" id="PF13382">
    <property type="entry name" value="Adenine_deam_C"/>
    <property type="match status" value="1"/>
</dbReference>
<dbReference type="Pfam" id="PF01979">
    <property type="entry name" value="Amidohydro_1"/>
    <property type="match status" value="1"/>
</dbReference>
<dbReference type="SUPFAM" id="SSF51338">
    <property type="entry name" value="Composite domain of metallo-dependent hydrolases"/>
    <property type="match status" value="1"/>
</dbReference>
<dbReference type="SUPFAM" id="SSF51556">
    <property type="entry name" value="Metallo-dependent hydrolases"/>
    <property type="match status" value="1"/>
</dbReference>
<keyword id="KW-0378">Hydrolase</keyword>
<keyword id="KW-0464">Manganese</keyword>
<proteinExistence type="inferred from homology"/>
<reference key="1">
    <citation type="journal article" date="2008" name="Environ. Microbiol.">
        <title>The complete genome sequence of Moorella thermoacetica (f. Clostridium thermoaceticum).</title>
        <authorList>
            <person name="Pierce E."/>
            <person name="Xie G."/>
            <person name="Barabote R.D."/>
            <person name="Saunders E."/>
            <person name="Han C.S."/>
            <person name="Detter J.C."/>
            <person name="Richardson P."/>
            <person name="Brettin T.S."/>
            <person name="Das A."/>
            <person name="Ljungdahl L.G."/>
            <person name="Ragsdale S.W."/>
        </authorList>
    </citation>
    <scope>NUCLEOTIDE SEQUENCE [LARGE SCALE GENOMIC DNA]</scope>
    <source>
        <strain>ATCC 39073 / JCM 9320</strain>
    </source>
</reference>
<accession>Q2RL95</accession>
<comment type="catalytic activity">
    <reaction evidence="1">
        <text>adenine + H2O + H(+) = hypoxanthine + NH4(+)</text>
        <dbReference type="Rhea" id="RHEA:23688"/>
        <dbReference type="ChEBI" id="CHEBI:15377"/>
        <dbReference type="ChEBI" id="CHEBI:15378"/>
        <dbReference type="ChEBI" id="CHEBI:16708"/>
        <dbReference type="ChEBI" id="CHEBI:17368"/>
        <dbReference type="ChEBI" id="CHEBI:28938"/>
        <dbReference type="EC" id="3.5.4.2"/>
    </reaction>
</comment>
<comment type="cofactor">
    <cofactor evidence="1">
        <name>Mn(2+)</name>
        <dbReference type="ChEBI" id="CHEBI:29035"/>
    </cofactor>
</comment>
<comment type="similarity">
    <text evidence="1">Belongs to the metallo-dependent hydrolases superfamily. Adenine deaminase family.</text>
</comment>
<feature type="chain" id="PRO_0000292388" description="Adenine deaminase">
    <location>
        <begin position="1"/>
        <end position="596"/>
    </location>
</feature>
<evidence type="ECO:0000255" key="1">
    <source>
        <dbReference type="HAMAP-Rule" id="MF_01518"/>
    </source>
</evidence>
<protein>
    <recommendedName>
        <fullName evidence="1">Adenine deaminase</fullName>
        <shortName evidence="1">Adenase</shortName>
        <shortName evidence="1">Adenine aminase</shortName>
        <ecNumber evidence="1">3.5.4.2</ecNumber>
    </recommendedName>
</protein>
<gene>
    <name evidence="1" type="primary">ade</name>
    <name type="ordered locus">Moth_0463</name>
</gene>
<name>ADEC_MOOTA</name>